<sequence>MAVQKSRVTPSRRGQRRSHDALAAKKLSIDPTSGEVHIRHHVTADGYYRGKKVIAIKASVVEED</sequence>
<comment type="similarity">
    <text evidence="1">Belongs to the bacterial ribosomal protein bL32 family.</text>
</comment>
<reference key="1">
    <citation type="journal article" date="2010" name="J. Bacteriol.">
        <title>Whole genome sequences of two Xylella fastidiosa strains (M12 and M23) causing almond leaf scorch disease in California.</title>
        <authorList>
            <person name="Chen J."/>
            <person name="Xie G."/>
            <person name="Han S."/>
            <person name="Chertkov O."/>
            <person name="Sims D."/>
            <person name="Civerolo E.L."/>
        </authorList>
    </citation>
    <scope>NUCLEOTIDE SEQUENCE [LARGE SCALE GENOMIC DNA]</scope>
    <source>
        <strain>M12</strain>
    </source>
</reference>
<protein>
    <recommendedName>
        <fullName evidence="1">Large ribosomal subunit protein bL32</fullName>
    </recommendedName>
    <alternativeName>
        <fullName evidence="3">50S ribosomal protein L32</fullName>
    </alternativeName>
</protein>
<evidence type="ECO:0000255" key="1">
    <source>
        <dbReference type="HAMAP-Rule" id="MF_00340"/>
    </source>
</evidence>
<evidence type="ECO:0000256" key="2">
    <source>
        <dbReference type="SAM" id="MobiDB-lite"/>
    </source>
</evidence>
<evidence type="ECO:0000305" key="3"/>
<gene>
    <name evidence="1" type="primary">rpmF</name>
    <name type="ordered locus">Xfasm12_1207</name>
</gene>
<dbReference type="EMBL" id="CP000941">
    <property type="protein sequence ID" value="ACA12156.1"/>
    <property type="molecule type" value="Genomic_DNA"/>
</dbReference>
<dbReference type="RefSeq" id="WP_004084879.1">
    <property type="nucleotide sequence ID" value="NC_010513.1"/>
</dbReference>
<dbReference type="SMR" id="B0U2S7"/>
<dbReference type="KEGG" id="xfm:Xfasm12_1207"/>
<dbReference type="HOGENOM" id="CLU_129084_2_1_6"/>
<dbReference type="GO" id="GO:0015934">
    <property type="term" value="C:large ribosomal subunit"/>
    <property type="evidence" value="ECO:0007669"/>
    <property type="project" value="InterPro"/>
</dbReference>
<dbReference type="GO" id="GO:0003735">
    <property type="term" value="F:structural constituent of ribosome"/>
    <property type="evidence" value="ECO:0007669"/>
    <property type="project" value="InterPro"/>
</dbReference>
<dbReference type="GO" id="GO:0006412">
    <property type="term" value="P:translation"/>
    <property type="evidence" value="ECO:0007669"/>
    <property type="project" value="UniProtKB-UniRule"/>
</dbReference>
<dbReference type="HAMAP" id="MF_00340">
    <property type="entry name" value="Ribosomal_bL32"/>
    <property type="match status" value="1"/>
</dbReference>
<dbReference type="InterPro" id="IPR002677">
    <property type="entry name" value="Ribosomal_bL32"/>
</dbReference>
<dbReference type="InterPro" id="IPR044957">
    <property type="entry name" value="Ribosomal_bL32_bact"/>
</dbReference>
<dbReference type="InterPro" id="IPR011332">
    <property type="entry name" value="Ribosomal_zn-bd"/>
</dbReference>
<dbReference type="NCBIfam" id="TIGR01031">
    <property type="entry name" value="rpmF_bact"/>
    <property type="match status" value="1"/>
</dbReference>
<dbReference type="PANTHER" id="PTHR35534">
    <property type="entry name" value="50S RIBOSOMAL PROTEIN L32"/>
    <property type="match status" value="1"/>
</dbReference>
<dbReference type="PANTHER" id="PTHR35534:SF1">
    <property type="entry name" value="LARGE RIBOSOMAL SUBUNIT PROTEIN BL32"/>
    <property type="match status" value="1"/>
</dbReference>
<dbReference type="Pfam" id="PF01783">
    <property type="entry name" value="Ribosomal_L32p"/>
    <property type="match status" value="1"/>
</dbReference>
<dbReference type="SUPFAM" id="SSF57829">
    <property type="entry name" value="Zn-binding ribosomal proteins"/>
    <property type="match status" value="1"/>
</dbReference>
<proteinExistence type="inferred from homology"/>
<organism>
    <name type="scientific">Xylella fastidiosa (strain M12)</name>
    <dbReference type="NCBI Taxonomy" id="405440"/>
    <lineage>
        <taxon>Bacteria</taxon>
        <taxon>Pseudomonadati</taxon>
        <taxon>Pseudomonadota</taxon>
        <taxon>Gammaproteobacteria</taxon>
        <taxon>Lysobacterales</taxon>
        <taxon>Lysobacteraceae</taxon>
        <taxon>Xylella</taxon>
    </lineage>
</organism>
<name>RL32_XYLFM</name>
<feature type="chain" id="PRO_1000120193" description="Large ribosomal subunit protein bL32">
    <location>
        <begin position="1"/>
        <end position="64"/>
    </location>
</feature>
<feature type="region of interest" description="Disordered" evidence="2">
    <location>
        <begin position="1"/>
        <end position="23"/>
    </location>
</feature>
<accession>B0U2S7</accession>
<keyword id="KW-0687">Ribonucleoprotein</keyword>
<keyword id="KW-0689">Ribosomal protein</keyword>